<organism>
    <name type="scientific">Methanococcus vannielii (strain ATCC 35089 / DSM 1224 / JCM 13029 / OCM 148 / SB)</name>
    <dbReference type="NCBI Taxonomy" id="406327"/>
    <lineage>
        <taxon>Archaea</taxon>
        <taxon>Methanobacteriati</taxon>
        <taxon>Methanobacteriota</taxon>
        <taxon>Methanomada group</taxon>
        <taxon>Methanococci</taxon>
        <taxon>Methanococcales</taxon>
        <taxon>Methanococcaceae</taxon>
        <taxon>Methanococcus</taxon>
    </lineage>
</organism>
<dbReference type="EC" id="4.2.1.20" evidence="1"/>
<dbReference type="EMBL" id="CP000742">
    <property type="protein sequence ID" value="ABR54236.1"/>
    <property type="molecule type" value="Genomic_DNA"/>
</dbReference>
<dbReference type="RefSeq" id="WP_011972139.1">
    <property type="nucleotide sequence ID" value="NC_009634.1"/>
</dbReference>
<dbReference type="SMR" id="A6UP14"/>
<dbReference type="STRING" id="406327.Mevan_0327"/>
<dbReference type="GeneID" id="5325934"/>
<dbReference type="KEGG" id="mvn:Mevan_0327"/>
<dbReference type="eggNOG" id="arCOG01086">
    <property type="taxonomic scope" value="Archaea"/>
</dbReference>
<dbReference type="HOGENOM" id="CLU_016734_0_2_2"/>
<dbReference type="OrthoDB" id="25658at2157"/>
<dbReference type="UniPathway" id="UPA00035">
    <property type="reaction ID" value="UER00044"/>
</dbReference>
<dbReference type="Proteomes" id="UP000001107">
    <property type="component" value="Chromosome"/>
</dbReference>
<dbReference type="GO" id="GO:0005829">
    <property type="term" value="C:cytosol"/>
    <property type="evidence" value="ECO:0007669"/>
    <property type="project" value="TreeGrafter"/>
</dbReference>
<dbReference type="GO" id="GO:0004834">
    <property type="term" value="F:tryptophan synthase activity"/>
    <property type="evidence" value="ECO:0007669"/>
    <property type="project" value="UniProtKB-UniRule"/>
</dbReference>
<dbReference type="CDD" id="cd04724">
    <property type="entry name" value="Tryptophan_synthase_alpha"/>
    <property type="match status" value="1"/>
</dbReference>
<dbReference type="FunFam" id="3.20.20.70:FF:000037">
    <property type="entry name" value="Tryptophan synthase alpha chain"/>
    <property type="match status" value="1"/>
</dbReference>
<dbReference type="Gene3D" id="3.20.20.70">
    <property type="entry name" value="Aldolase class I"/>
    <property type="match status" value="1"/>
</dbReference>
<dbReference type="HAMAP" id="MF_00131">
    <property type="entry name" value="Trp_synth_alpha"/>
    <property type="match status" value="1"/>
</dbReference>
<dbReference type="InterPro" id="IPR013785">
    <property type="entry name" value="Aldolase_TIM"/>
</dbReference>
<dbReference type="InterPro" id="IPR011060">
    <property type="entry name" value="RibuloseP-bd_barrel"/>
</dbReference>
<dbReference type="InterPro" id="IPR018204">
    <property type="entry name" value="Trp_synthase_alpha_AS"/>
</dbReference>
<dbReference type="InterPro" id="IPR002028">
    <property type="entry name" value="Trp_synthase_suA"/>
</dbReference>
<dbReference type="NCBIfam" id="TIGR00262">
    <property type="entry name" value="trpA"/>
    <property type="match status" value="1"/>
</dbReference>
<dbReference type="PANTHER" id="PTHR43406:SF1">
    <property type="entry name" value="TRYPTOPHAN SYNTHASE ALPHA CHAIN, CHLOROPLASTIC"/>
    <property type="match status" value="1"/>
</dbReference>
<dbReference type="PANTHER" id="PTHR43406">
    <property type="entry name" value="TRYPTOPHAN SYNTHASE, ALPHA CHAIN"/>
    <property type="match status" value="1"/>
</dbReference>
<dbReference type="Pfam" id="PF00290">
    <property type="entry name" value="Trp_syntA"/>
    <property type="match status" value="1"/>
</dbReference>
<dbReference type="SUPFAM" id="SSF51366">
    <property type="entry name" value="Ribulose-phoshate binding barrel"/>
    <property type="match status" value="1"/>
</dbReference>
<dbReference type="PROSITE" id="PS00167">
    <property type="entry name" value="TRP_SYNTHASE_ALPHA"/>
    <property type="match status" value="1"/>
</dbReference>
<comment type="function">
    <text>The alpha subunit is responsible for the aldol cleavage of indoleglycerol phosphate to indole and glyceraldehyde 3-phosphate.</text>
</comment>
<comment type="catalytic activity">
    <reaction evidence="1">
        <text>(1S,2R)-1-C-(indol-3-yl)glycerol 3-phosphate + L-serine = D-glyceraldehyde 3-phosphate + L-tryptophan + H2O</text>
        <dbReference type="Rhea" id="RHEA:10532"/>
        <dbReference type="ChEBI" id="CHEBI:15377"/>
        <dbReference type="ChEBI" id="CHEBI:33384"/>
        <dbReference type="ChEBI" id="CHEBI:57912"/>
        <dbReference type="ChEBI" id="CHEBI:58866"/>
        <dbReference type="ChEBI" id="CHEBI:59776"/>
        <dbReference type="EC" id="4.2.1.20"/>
    </reaction>
</comment>
<comment type="pathway">
    <text evidence="1">Amino-acid biosynthesis; L-tryptophan biosynthesis; L-tryptophan from chorismate: step 5/5.</text>
</comment>
<comment type="subunit">
    <text evidence="1">Tetramer of two alpha and two beta chains.</text>
</comment>
<comment type="similarity">
    <text evidence="1">Belongs to the TrpA family.</text>
</comment>
<sequence>MNKPVLVSFLVSGDPNADATLKFMKALDKYSGVIELGIPFSDPVADGATIQAADVRALSNGFKIAKSFEILKEFRKESNTPVILMTYYNPVYNRGIENFVTQAKEAGANGLIIVDLPLQEATEYRKICKKHEMGTVFLSAPNTPEERLKMSDEASTEFLYLISTFGITGARESFEQMTFDFIKRARKTCKGKICVGFGISKGTHAESLIEQGADGVIVGSAFVDIIKTYGDSNEAITKLEELAKELHNGIEKGFEKRNK</sequence>
<keyword id="KW-0028">Amino-acid biosynthesis</keyword>
<keyword id="KW-0057">Aromatic amino acid biosynthesis</keyword>
<keyword id="KW-0456">Lyase</keyword>
<keyword id="KW-0822">Tryptophan biosynthesis</keyword>
<accession>A6UP14</accession>
<proteinExistence type="inferred from homology"/>
<evidence type="ECO:0000255" key="1">
    <source>
        <dbReference type="HAMAP-Rule" id="MF_00131"/>
    </source>
</evidence>
<gene>
    <name evidence="1" type="primary">trpA</name>
    <name type="ordered locus">Mevan_0327</name>
</gene>
<reference key="1">
    <citation type="submission" date="2007-06" db="EMBL/GenBank/DDBJ databases">
        <title>Complete sequence of Methanococcus vannielii SB.</title>
        <authorList>
            <consortium name="US DOE Joint Genome Institute"/>
            <person name="Copeland A."/>
            <person name="Lucas S."/>
            <person name="Lapidus A."/>
            <person name="Barry K."/>
            <person name="Glavina del Rio T."/>
            <person name="Dalin E."/>
            <person name="Tice H."/>
            <person name="Pitluck S."/>
            <person name="Chain P."/>
            <person name="Malfatti S."/>
            <person name="Shin M."/>
            <person name="Vergez L."/>
            <person name="Schmutz J."/>
            <person name="Larimer F."/>
            <person name="Land M."/>
            <person name="Hauser L."/>
            <person name="Kyrpides N."/>
            <person name="Anderson I."/>
            <person name="Sieprawska-Lupa M."/>
            <person name="Whitman W.B."/>
            <person name="Richardson P."/>
        </authorList>
    </citation>
    <scope>NUCLEOTIDE SEQUENCE [LARGE SCALE GENOMIC DNA]</scope>
    <source>
        <strain>ATCC 35089 / DSM 1224 / JCM 13029 / OCM 148 / SB</strain>
    </source>
</reference>
<protein>
    <recommendedName>
        <fullName evidence="1">Tryptophan synthase alpha chain</fullName>
        <ecNumber evidence="1">4.2.1.20</ecNumber>
    </recommendedName>
</protein>
<name>TRPA_METVS</name>
<feature type="chain" id="PRO_1000018231" description="Tryptophan synthase alpha chain">
    <location>
        <begin position="1"/>
        <end position="259"/>
    </location>
</feature>
<feature type="active site" description="Proton acceptor" evidence="1">
    <location>
        <position position="35"/>
    </location>
</feature>
<feature type="active site" description="Proton acceptor" evidence="1">
    <location>
        <position position="46"/>
    </location>
</feature>